<feature type="chain" id="PRO_0000374972" description="Ribosomal protein uS12 methylthiotransferase RimO">
    <location>
        <begin position="1"/>
        <end position="441"/>
    </location>
</feature>
<feature type="domain" description="MTTase N-terminal" evidence="1">
    <location>
        <begin position="7"/>
        <end position="117"/>
    </location>
</feature>
<feature type="domain" description="Radical SAM core" evidence="2">
    <location>
        <begin position="134"/>
        <end position="371"/>
    </location>
</feature>
<feature type="domain" description="TRAM" evidence="1">
    <location>
        <begin position="374"/>
        <end position="440"/>
    </location>
</feature>
<feature type="binding site" evidence="1">
    <location>
        <position position="16"/>
    </location>
    <ligand>
        <name>[4Fe-4S] cluster</name>
        <dbReference type="ChEBI" id="CHEBI:49883"/>
        <label>1</label>
    </ligand>
</feature>
<feature type="binding site" evidence="1">
    <location>
        <position position="52"/>
    </location>
    <ligand>
        <name>[4Fe-4S] cluster</name>
        <dbReference type="ChEBI" id="CHEBI:49883"/>
        <label>1</label>
    </ligand>
</feature>
<feature type="binding site" evidence="1">
    <location>
        <position position="81"/>
    </location>
    <ligand>
        <name>[4Fe-4S] cluster</name>
        <dbReference type="ChEBI" id="CHEBI:49883"/>
        <label>1</label>
    </ligand>
</feature>
<feature type="binding site" evidence="1">
    <location>
        <position position="148"/>
    </location>
    <ligand>
        <name>[4Fe-4S] cluster</name>
        <dbReference type="ChEBI" id="CHEBI:49883"/>
        <label>2</label>
        <note>4Fe-4S-S-AdoMet</note>
    </ligand>
</feature>
<feature type="binding site" evidence="1">
    <location>
        <position position="152"/>
    </location>
    <ligand>
        <name>[4Fe-4S] cluster</name>
        <dbReference type="ChEBI" id="CHEBI:49883"/>
        <label>2</label>
        <note>4Fe-4S-S-AdoMet</note>
    </ligand>
</feature>
<feature type="binding site" evidence="1">
    <location>
        <position position="155"/>
    </location>
    <ligand>
        <name>[4Fe-4S] cluster</name>
        <dbReference type="ChEBI" id="CHEBI:49883"/>
        <label>2</label>
        <note>4Fe-4S-S-AdoMet</note>
    </ligand>
</feature>
<dbReference type="EC" id="2.8.4.4" evidence="1"/>
<dbReference type="EMBL" id="CP000301">
    <property type="protein sequence ID" value="ABD88170.1"/>
    <property type="molecule type" value="Genomic_DNA"/>
</dbReference>
<dbReference type="SMR" id="Q214L6"/>
<dbReference type="STRING" id="316056.RPC_2620"/>
<dbReference type="KEGG" id="rpc:RPC_2620"/>
<dbReference type="eggNOG" id="COG0621">
    <property type="taxonomic scope" value="Bacteria"/>
</dbReference>
<dbReference type="HOGENOM" id="CLU_018697_0_0_5"/>
<dbReference type="OrthoDB" id="9805215at2"/>
<dbReference type="GO" id="GO:0005829">
    <property type="term" value="C:cytosol"/>
    <property type="evidence" value="ECO:0007669"/>
    <property type="project" value="TreeGrafter"/>
</dbReference>
<dbReference type="GO" id="GO:0051539">
    <property type="term" value="F:4 iron, 4 sulfur cluster binding"/>
    <property type="evidence" value="ECO:0007669"/>
    <property type="project" value="UniProtKB-UniRule"/>
</dbReference>
<dbReference type="GO" id="GO:0035599">
    <property type="term" value="F:aspartic acid methylthiotransferase activity"/>
    <property type="evidence" value="ECO:0007669"/>
    <property type="project" value="TreeGrafter"/>
</dbReference>
<dbReference type="GO" id="GO:0046872">
    <property type="term" value="F:metal ion binding"/>
    <property type="evidence" value="ECO:0007669"/>
    <property type="project" value="UniProtKB-KW"/>
</dbReference>
<dbReference type="GO" id="GO:0103039">
    <property type="term" value="F:protein methylthiotransferase activity"/>
    <property type="evidence" value="ECO:0007669"/>
    <property type="project" value="UniProtKB-EC"/>
</dbReference>
<dbReference type="GO" id="GO:0006400">
    <property type="term" value="P:tRNA modification"/>
    <property type="evidence" value="ECO:0007669"/>
    <property type="project" value="InterPro"/>
</dbReference>
<dbReference type="CDD" id="cd01335">
    <property type="entry name" value="Radical_SAM"/>
    <property type="match status" value="1"/>
</dbReference>
<dbReference type="FunFam" id="2.40.50.140:FF:000060">
    <property type="entry name" value="Ribosomal protein S12 methylthiotransferase RimO"/>
    <property type="match status" value="1"/>
</dbReference>
<dbReference type="FunFam" id="3.40.50.12160:FF:000002">
    <property type="entry name" value="Ribosomal protein S12 methylthiotransferase RimO"/>
    <property type="match status" value="1"/>
</dbReference>
<dbReference type="FunFam" id="3.80.30.20:FF:000001">
    <property type="entry name" value="tRNA-2-methylthio-N(6)-dimethylallyladenosine synthase 2"/>
    <property type="match status" value="1"/>
</dbReference>
<dbReference type="Gene3D" id="3.40.50.12160">
    <property type="entry name" value="Methylthiotransferase, N-terminal domain"/>
    <property type="match status" value="1"/>
</dbReference>
<dbReference type="Gene3D" id="2.40.50.140">
    <property type="entry name" value="Nucleic acid-binding proteins"/>
    <property type="match status" value="1"/>
</dbReference>
<dbReference type="Gene3D" id="3.80.30.20">
    <property type="entry name" value="tm_1862 like domain"/>
    <property type="match status" value="1"/>
</dbReference>
<dbReference type="HAMAP" id="MF_01865">
    <property type="entry name" value="MTTase_RimO"/>
    <property type="match status" value="1"/>
</dbReference>
<dbReference type="InterPro" id="IPR006638">
    <property type="entry name" value="Elp3/MiaA/NifB-like_rSAM"/>
</dbReference>
<dbReference type="InterPro" id="IPR005839">
    <property type="entry name" value="Methylthiotransferase"/>
</dbReference>
<dbReference type="InterPro" id="IPR020612">
    <property type="entry name" value="Methylthiotransferase_CS"/>
</dbReference>
<dbReference type="InterPro" id="IPR013848">
    <property type="entry name" value="Methylthiotransferase_N"/>
</dbReference>
<dbReference type="InterPro" id="IPR038135">
    <property type="entry name" value="Methylthiotransferase_N_sf"/>
</dbReference>
<dbReference type="InterPro" id="IPR012340">
    <property type="entry name" value="NA-bd_OB-fold"/>
</dbReference>
<dbReference type="InterPro" id="IPR005840">
    <property type="entry name" value="Ribosomal_uS12_MeSTrfase_RimO"/>
</dbReference>
<dbReference type="InterPro" id="IPR007197">
    <property type="entry name" value="rSAM"/>
</dbReference>
<dbReference type="InterPro" id="IPR023404">
    <property type="entry name" value="rSAM_horseshoe"/>
</dbReference>
<dbReference type="InterPro" id="IPR002792">
    <property type="entry name" value="TRAM_dom"/>
</dbReference>
<dbReference type="NCBIfam" id="TIGR01125">
    <property type="entry name" value="30S ribosomal protein S12 methylthiotransferase RimO"/>
    <property type="match status" value="1"/>
</dbReference>
<dbReference type="NCBIfam" id="TIGR00089">
    <property type="entry name" value="MiaB/RimO family radical SAM methylthiotransferase"/>
    <property type="match status" value="1"/>
</dbReference>
<dbReference type="PANTHER" id="PTHR43837">
    <property type="entry name" value="RIBOSOMAL PROTEIN S12 METHYLTHIOTRANSFERASE RIMO"/>
    <property type="match status" value="1"/>
</dbReference>
<dbReference type="PANTHER" id="PTHR43837:SF1">
    <property type="entry name" value="RIBOSOMAL PROTEIN US12 METHYLTHIOTRANSFERASE RIMO"/>
    <property type="match status" value="1"/>
</dbReference>
<dbReference type="Pfam" id="PF04055">
    <property type="entry name" value="Radical_SAM"/>
    <property type="match status" value="1"/>
</dbReference>
<dbReference type="Pfam" id="PF18693">
    <property type="entry name" value="TRAM_2"/>
    <property type="match status" value="1"/>
</dbReference>
<dbReference type="Pfam" id="PF00919">
    <property type="entry name" value="UPF0004"/>
    <property type="match status" value="1"/>
</dbReference>
<dbReference type="SFLD" id="SFLDG01082">
    <property type="entry name" value="B12-binding_domain_containing"/>
    <property type="match status" value="1"/>
</dbReference>
<dbReference type="SFLD" id="SFLDG01061">
    <property type="entry name" value="methylthiotransferase"/>
    <property type="match status" value="1"/>
</dbReference>
<dbReference type="SFLD" id="SFLDF00274">
    <property type="entry name" value="ribosomal_protein_S12_methylth"/>
    <property type="match status" value="1"/>
</dbReference>
<dbReference type="SMART" id="SM00729">
    <property type="entry name" value="Elp3"/>
    <property type="match status" value="1"/>
</dbReference>
<dbReference type="SUPFAM" id="SSF102114">
    <property type="entry name" value="Radical SAM enzymes"/>
    <property type="match status" value="1"/>
</dbReference>
<dbReference type="PROSITE" id="PS51449">
    <property type="entry name" value="MTTASE_N"/>
    <property type="match status" value="1"/>
</dbReference>
<dbReference type="PROSITE" id="PS01278">
    <property type="entry name" value="MTTASE_RADICAL"/>
    <property type="match status" value="1"/>
</dbReference>
<dbReference type="PROSITE" id="PS51918">
    <property type="entry name" value="RADICAL_SAM"/>
    <property type="match status" value="1"/>
</dbReference>
<dbReference type="PROSITE" id="PS50926">
    <property type="entry name" value="TRAM"/>
    <property type="match status" value="1"/>
</dbReference>
<reference key="1">
    <citation type="submission" date="2006-03" db="EMBL/GenBank/DDBJ databases">
        <title>Complete sequence of Rhodopseudomonas palustris BisB18.</title>
        <authorList>
            <consortium name="US DOE Joint Genome Institute"/>
            <person name="Copeland A."/>
            <person name="Lucas S."/>
            <person name="Lapidus A."/>
            <person name="Barry K."/>
            <person name="Detter J.C."/>
            <person name="Glavina del Rio T."/>
            <person name="Hammon N."/>
            <person name="Israni S."/>
            <person name="Dalin E."/>
            <person name="Tice H."/>
            <person name="Pitluck S."/>
            <person name="Chain P."/>
            <person name="Malfatti S."/>
            <person name="Shin M."/>
            <person name="Vergez L."/>
            <person name="Schmutz J."/>
            <person name="Larimer F."/>
            <person name="Land M."/>
            <person name="Hauser L."/>
            <person name="Pelletier D.A."/>
            <person name="Kyrpides N."/>
            <person name="Anderson I."/>
            <person name="Oda Y."/>
            <person name="Harwood C.S."/>
            <person name="Richardson P."/>
        </authorList>
    </citation>
    <scope>NUCLEOTIDE SEQUENCE [LARGE SCALE GENOMIC DNA]</scope>
    <source>
        <strain>BisB18</strain>
    </source>
</reference>
<evidence type="ECO:0000255" key="1">
    <source>
        <dbReference type="HAMAP-Rule" id="MF_01865"/>
    </source>
</evidence>
<evidence type="ECO:0000255" key="2">
    <source>
        <dbReference type="PROSITE-ProRule" id="PRU01266"/>
    </source>
</evidence>
<name>RIMO_RHOPB</name>
<accession>Q214L6</accession>
<gene>
    <name evidence="1" type="primary">rimO</name>
    <name type="ordered locus">RPC_2620</name>
</gene>
<proteinExistence type="inferred from homology"/>
<protein>
    <recommendedName>
        <fullName evidence="1">Ribosomal protein uS12 methylthiotransferase RimO</fullName>
        <shortName evidence="1">uS12 MTTase</shortName>
        <shortName evidence="1">uS12 methylthiotransferase</shortName>
        <ecNumber evidence="1">2.8.4.4</ecNumber>
    </recommendedName>
    <alternativeName>
        <fullName evidence="1">Ribosomal protein uS12 (aspartate-C(3))-methylthiotransferase</fullName>
    </alternativeName>
    <alternativeName>
        <fullName evidence="1">Ribosome maturation factor RimO</fullName>
    </alternativeName>
</protein>
<keyword id="KW-0004">4Fe-4S</keyword>
<keyword id="KW-0963">Cytoplasm</keyword>
<keyword id="KW-0408">Iron</keyword>
<keyword id="KW-0411">Iron-sulfur</keyword>
<keyword id="KW-0479">Metal-binding</keyword>
<keyword id="KW-0949">S-adenosyl-L-methionine</keyword>
<keyword id="KW-0808">Transferase</keyword>
<organism>
    <name type="scientific">Rhodopseudomonas palustris (strain BisB18)</name>
    <dbReference type="NCBI Taxonomy" id="316056"/>
    <lineage>
        <taxon>Bacteria</taxon>
        <taxon>Pseudomonadati</taxon>
        <taxon>Pseudomonadota</taxon>
        <taxon>Alphaproteobacteria</taxon>
        <taxon>Hyphomicrobiales</taxon>
        <taxon>Nitrobacteraceae</taxon>
        <taxon>Rhodopseudomonas</taxon>
    </lineage>
</organism>
<sequence>MNQAAAPKVSFVSLGCPKALVDSERIITRLRAEGYELARKHDGADLVIVNTCGFLDSAKKESLGAIGEAMAANGKVIVTGCMGAEPEQIEAAYPNLLSITGPQQYESVLDAVHRALPPLHNPHLDLVPAQGIKLTPRHYAYLKISEGCNNRCSFCIIPKLRGDLVSRPAGEVLREAEKLVKAGVKELLVVSQDTSAYGVDLKYAESPWQDRNVRARFYDLAKELGELGAWVRLQYVYPYPHVDEVIGLMAQGKVLPYLDIPFQHASPEVLKQMKRPAAQDKTLARIKQWREICPELTLRSTFIVGFPGETDSDFAYLLDWLEQAEIDRVGAFKYEAVRGATSNALPDQVSDEVKTERWNALMARQQKISARRLKRKVGTRQQVIIDEVGPTVSKGRSKADAPQIDGSVYLTSRRPLRVGEIVTAKIERADAYDLHGSVAGF</sequence>
<comment type="function">
    <text evidence="1">Catalyzes the methylthiolation of an aspartic acid residue of ribosomal protein uS12.</text>
</comment>
<comment type="catalytic activity">
    <reaction evidence="1">
        <text>L-aspartate(89)-[ribosomal protein uS12]-hydrogen + (sulfur carrier)-SH + AH2 + 2 S-adenosyl-L-methionine = 3-methylsulfanyl-L-aspartate(89)-[ribosomal protein uS12]-hydrogen + (sulfur carrier)-H + 5'-deoxyadenosine + L-methionine + A + S-adenosyl-L-homocysteine + 2 H(+)</text>
        <dbReference type="Rhea" id="RHEA:37087"/>
        <dbReference type="Rhea" id="RHEA-COMP:10460"/>
        <dbReference type="Rhea" id="RHEA-COMP:10461"/>
        <dbReference type="Rhea" id="RHEA-COMP:14737"/>
        <dbReference type="Rhea" id="RHEA-COMP:14739"/>
        <dbReference type="ChEBI" id="CHEBI:13193"/>
        <dbReference type="ChEBI" id="CHEBI:15378"/>
        <dbReference type="ChEBI" id="CHEBI:17319"/>
        <dbReference type="ChEBI" id="CHEBI:17499"/>
        <dbReference type="ChEBI" id="CHEBI:29917"/>
        <dbReference type="ChEBI" id="CHEBI:29961"/>
        <dbReference type="ChEBI" id="CHEBI:57844"/>
        <dbReference type="ChEBI" id="CHEBI:57856"/>
        <dbReference type="ChEBI" id="CHEBI:59789"/>
        <dbReference type="ChEBI" id="CHEBI:64428"/>
        <dbReference type="ChEBI" id="CHEBI:73599"/>
        <dbReference type="EC" id="2.8.4.4"/>
    </reaction>
</comment>
<comment type="cofactor">
    <cofactor evidence="1">
        <name>[4Fe-4S] cluster</name>
        <dbReference type="ChEBI" id="CHEBI:49883"/>
    </cofactor>
    <text evidence="1">Binds 2 [4Fe-4S] clusters. One cluster is coordinated with 3 cysteines and an exchangeable S-adenosyl-L-methionine.</text>
</comment>
<comment type="subcellular location">
    <subcellularLocation>
        <location evidence="1">Cytoplasm</location>
    </subcellularLocation>
</comment>
<comment type="similarity">
    <text evidence="1">Belongs to the methylthiotransferase family. RimO subfamily.</text>
</comment>